<keyword id="KW-1185">Reference proteome</keyword>
<keyword id="KW-0687">Ribonucleoprotein</keyword>
<keyword id="KW-0689">Ribosomal protein</keyword>
<keyword id="KW-0694">RNA-binding</keyword>
<keyword id="KW-0699">rRNA-binding</keyword>
<feature type="chain" id="PRO_0000123148" description="Small ribosomal subunit protein uS11">
    <location>
        <begin position="1"/>
        <end position="129"/>
    </location>
</feature>
<accession>Q6CZZ3</accession>
<dbReference type="EMBL" id="BX950851">
    <property type="protein sequence ID" value="CAG76905.1"/>
    <property type="molecule type" value="Genomic_DNA"/>
</dbReference>
<dbReference type="RefSeq" id="WP_002919257.1">
    <property type="nucleotide sequence ID" value="NC_004547.2"/>
</dbReference>
<dbReference type="SMR" id="Q6CZZ3"/>
<dbReference type="STRING" id="218491.ECA4008"/>
<dbReference type="GeneID" id="97125494"/>
<dbReference type="KEGG" id="eca:ECA4008"/>
<dbReference type="eggNOG" id="COG0100">
    <property type="taxonomic scope" value="Bacteria"/>
</dbReference>
<dbReference type="HOGENOM" id="CLU_072439_5_0_6"/>
<dbReference type="OrthoDB" id="9806415at2"/>
<dbReference type="Proteomes" id="UP000007966">
    <property type="component" value="Chromosome"/>
</dbReference>
<dbReference type="GO" id="GO:1990904">
    <property type="term" value="C:ribonucleoprotein complex"/>
    <property type="evidence" value="ECO:0007669"/>
    <property type="project" value="UniProtKB-KW"/>
</dbReference>
<dbReference type="GO" id="GO:0005840">
    <property type="term" value="C:ribosome"/>
    <property type="evidence" value="ECO:0007669"/>
    <property type="project" value="UniProtKB-KW"/>
</dbReference>
<dbReference type="GO" id="GO:0019843">
    <property type="term" value="F:rRNA binding"/>
    <property type="evidence" value="ECO:0007669"/>
    <property type="project" value="UniProtKB-UniRule"/>
</dbReference>
<dbReference type="GO" id="GO:0003735">
    <property type="term" value="F:structural constituent of ribosome"/>
    <property type="evidence" value="ECO:0007669"/>
    <property type="project" value="InterPro"/>
</dbReference>
<dbReference type="GO" id="GO:0006412">
    <property type="term" value="P:translation"/>
    <property type="evidence" value="ECO:0007669"/>
    <property type="project" value="UniProtKB-UniRule"/>
</dbReference>
<dbReference type="FunFam" id="3.30.420.80:FF:000001">
    <property type="entry name" value="30S ribosomal protein S11"/>
    <property type="match status" value="1"/>
</dbReference>
<dbReference type="Gene3D" id="3.30.420.80">
    <property type="entry name" value="Ribosomal protein S11"/>
    <property type="match status" value="1"/>
</dbReference>
<dbReference type="HAMAP" id="MF_01310">
    <property type="entry name" value="Ribosomal_uS11"/>
    <property type="match status" value="1"/>
</dbReference>
<dbReference type="InterPro" id="IPR001971">
    <property type="entry name" value="Ribosomal_uS11"/>
</dbReference>
<dbReference type="InterPro" id="IPR019981">
    <property type="entry name" value="Ribosomal_uS11_bac-type"/>
</dbReference>
<dbReference type="InterPro" id="IPR018102">
    <property type="entry name" value="Ribosomal_uS11_CS"/>
</dbReference>
<dbReference type="InterPro" id="IPR036967">
    <property type="entry name" value="Ribosomal_uS11_sf"/>
</dbReference>
<dbReference type="NCBIfam" id="NF003698">
    <property type="entry name" value="PRK05309.1"/>
    <property type="match status" value="1"/>
</dbReference>
<dbReference type="NCBIfam" id="TIGR03632">
    <property type="entry name" value="uS11_bact"/>
    <property type="match status" value="1"/>
</dbReference>
<dbReference type="PANTHER" id="PTHR11759">
    <property type="entry name" value="40S RIBOSOMAL PROTEIN S14/30S RIBOSOMAL PROTEIN S11"/>
    <property type="match status" value="1"/>
</dbReference>
<dbReference type="Pfam" id="PF00411">
    <property type="entry name" value="Ribosomal_S11"/>
    <property type="match status" value="1"/>
</dbReference>
<dbReference type="PIRSF" id="PIRSF002131">
    <property type="entry name" value="Ribosomal_S11"/>
    <property type="match status" value="1"/>
</dbReference>
<dbReference type="SUPFAM" id="SSF53137">
    <property type="entry name" value="Translational machinery components"/>
    <property type="match status" value="1"/>
</dbReference>
<dbReference type="PROSITE" id="PS00054">
    <property type="entry name" value="RIBOSOMAL_S11"/>
    <property type="match status" value="1"/>
</dbReference>
<protein>
    <recommendedName>
        <fullName evidence="1">Small ribosomal subunit protein uS11</fullName>
    </recommendedName>
    <alternativeName>
        <fullName evidence="2">30S ribosomal protein S11</fullName>
    </alternativeName>
</protein>
<evidence type="ECO:0000255" key="1">
    <source>
        <dbReference type="HAMAP-Rule" id="MF_01310"/>
    </source>
</evidence>
<evidence type="ECO:0000305" key="2"/>
<gene>
    <name evidence="1" type="primary">rpsK</name>
    <name type="ordered locus">ECA4008</name>
</gene>
<comment type="function">
    <text evidence="1">Located on the platform of the 30S subunit, it bridges several disparate RNA helices of the 16S rRNA. Forms part of the Shine-Dalgarno cleft in the 70S ribosome.</text>
</comment>
<comment type="subunit">
    <text evidence="1">Part of the 30S ribosomal subunit. Interacts with proteins S7 and S18. Binds to IF-3.</text>
</comment>
<comment type="similarity">
    <text evidence="1">Belongs to the universal ribosomal protein uS11 family.</text>
</comment>
<proteinExistence type="inferred from homology"/>
<reference key="1">
    <citation type="journal article" date="2004" name="Proc. Natl. Acad. Sci. U.S.A.">
        <title>Genome sequence of the enterobacterial phytopathogen Erwinia carotovora subsp. atroseptica and characterization of virulence factors.</title>
        <authorList>
            <person name="Bell K.S."/>
            <person name="Sebaihia M."/>
            <person name="Pritchard L."/>
            <person name="Holden M.T.G."/>
            <person name="Hyman L.J."/>
            <person name="Holeva M.C."/>
            <person name="Thomson N.R."/>
            <person name="Bentley S.D."/>
            <person name="Churcher L.J.C."/>
            <person name="Mungall K."/>
            <person name="Atkin R."/>
            <person name="Bason N."/>
            <person name="Brooks K."/>
            <person name="Chillingworth T."/>
            <person name="Clark K."/>
            <person name="Doggett J."/>
            <person name="Fraser A."/>
            <person name="Hance Z."/>
            <person name="Hauser H."/>
            <person name="Jagels K."/>
            <person name="Moule S."/>
            <person name="Norbertczak H."/>
            <person name="Ormond D."/>
            <person name="Price C."/>
            <person name="Quail M.A."/>
            <person name="Sanders M."/>
            <person name="Walker D."/>
            <person name="Whitehead S."/>
            <person name="Salmond G.P.C."/>
            <person name="Birch P.R.J."/>
            <person name="Parkhill J."/>
            <person name="Toth I.K."/>
        </authorList>
    </citation>
    <scope>NUCLEOTIDE SEQUENCE [LARGE SCALE GENOMIC DNA]</scope>
    <source>
        <strain>SCRI 1043 / ATCC BAA-672</strain>
    </source>
</reference>
<sequence>MAKAPIRARKRVRKQVSDGVAHIHASFNNTIVTITDRQGNALGWATAGGSGFRGSRKSTPFAAQVAAERCAEAVKEYGIKNLEVMVKGPGPGRESTIRALNAAGFRITNITDVTPIPHNGCRPPKKRRV</sequence>
<organism>
    <name type="scientific">Pectobacterium atrosepticum (strain SCRI 1043 / ATCC BAA-672)</name>
    <name type="common">Erwinia carotovora subsp. atroseptica</name>
    <dbReference type="NCBI Taxonomy" id="218491"/>
    <lineage>
        <taxon>Bacteria</taxon>
        <taxon>Pseudomonadati</taxon>
        <taxon>Pseudomonadota</taxon>
        <taxon>Gammaproteobacteria</taxon>
        <taxon>Enterobacterales</taxon>
        <taxon>Pectobacteriaceae</taxon>
        <taxon>Pectobacterium</taxon>
    </lineage>
</organism>
<name>RS11_PECAS</name>